<comment type="function">
    <text evidence="1">Catalyzes the anti-1,4-elimination of the C-3 phosphate and the C-6 proR hydrogen from 5-enolpyruvylshikimate-3-phosphate (EPSP) to yield chorismate, which is the branch point compound that serves as the starting substrate for the three terminal pathways of aromatic amino acid biosynthesis. This reaction introduces a second double bond into the aromatic ring system.</text>
</comment>
<comment type="catalytic activity">
    <reaction evidence="1">
        <text>5-O-(1-carboxyvinyl)-3-phosphoshikimate = chorismate + phosphate</text>
        <dbReference type="Rhea" id="RHEA:21020"/>
        <dbReference type="ChEBI" id="CHEBI:29748"/>
        <dbReference type="ChEBI" id="CHEBI:43474"/>
        <dbReference type="ChEBI" id="CHEBI:57701"/>
        <dbReference type="EC" id="4.2.3.5"/>
    </reaction>
</comment>
<comment type="cofactor">
    <cofactor evidence="1">
        <name>FMNH2</name>
        <dbReference type="ChEBI" id="CHEBI:57618"/>
    </cofactor>
    <text evidence="1">Reduced FMN (FMNH(2)).</text>
</comment>
<comment type="pathway">
    <text evidence="1">Metabolic intermediate biosynthesis; chorismate biosynthesis; chorismate from D-erythrose 4-phosphate and phosphoenolpyruvate: step 7/7.</text>
</comment>
<comment type="subunit">
    <text evidence="1">Homotetramer.</text>
</comment>
<comment type="similarity">
    <text evidence="1">Belongs to the chorismate synthase family.</text>
</comment>
<organism>
    <name type="scientific">Campylobacter hominis (strain ATCC BAA-381 / DSM 21671 / CCUG 45161 / LMG 19568 / NCTC 13146 / CH001A)</name>
    <dbReference type="NCBI Taxonomy" id="360107"/>
    <lineage>
        <taxon>Bacteria</taxon>
        <taxon>Pseudomonadati</taxon>
        <taxon>Campylobacterota</taxon>
        <taxon>Epsilonproteobacteria</taxon>
        <taxon>Campylobacterales</taxon>
        <taxon>Campylobacteraceae</taxon>
        <taxon>Campylobacter</taxon>
    </lineage>
</organism>
<protein>
    <recommendedName>
        <fullName evidence="1">Chorismate synthase</fullName>
        <shortName evidence="1">CS</shortName>
        <ecNumber evidence="1">4.2.3.5</ecNumber>
    </recommendedName>
    <alternativeName>
        <fullName evidence="1">5-enolpyruvylshikimate-3-phosphate phospholyase</fullName>
    </alternativeName>
</protein>
<evidence type="ECO:0000255" key="1">
    <source>
        <dbReference type="HAMAP-Rule" id="MF_00300"/>
    </source>
</evidence>
<accession>A7HZN6</accession>
<keyword id="KW-0028">Amino-acid biosynthesis</keyword>
<keyword id="KW-0057">Aromatic amino acid biosynthesis</keyword>
<keyword id="KW-0274">FAD</keyword>
<keyword id="KW-0285">Flavoprotein</keyword>
<keyword id="KW-0288">FMN</keyword>
<keyword id="KW-0456">Lyase</keyword>
<keyword id="KW-0521">NADP</keyword>
<keyword id="KW-1185">Reference proteome</keyword>
<gene>
    <name evidence="1" type="primary">aroC</name>
    <name type="ordered locus">CHAB381_0114</name>
</gene>
<feature type="chain" id="PRO_1000022473" description="Chorismate synthase">
    <location>
        <begin position="1"/>
        <end position="366"/>
    </location>
</feature>
<feature type="binding site" evidence="1">
    <location>
        <position position="46"/>
    </location>
    <ligand>
        <name>NADP(+)</name>
        <dbReference type="ChEBI" id="CHEBI:58349"/>
    </ligand>
</feature>
<feature type="binding site" evidence="1">
    <location>
        <begin position="122"/>
        <end position="124"/>
    </location>
    <ligand>
        <name>FMN</name>
        <dbReference type="ChEBI" id="CHEBI:58210"/>
    </ligand>
</feature>
<feature type="binding site" evidence="1">
    <location>
        <begin position="243"/>
        <end position="244"/>
    </location>
    <ligand>
        <name>FMN</name>
        <dbReference type="ChEBI" id="CHEBI:58210"/>
    </ligand>
</feature>
<feature type="binding site" evidence="1">
    <location>
        <position position="284"/>
    </location>
    <ligand>
        <name>FMN</name>
        <dbReference type="ChEBI" id="CHEBI:58210"/>
    </ligand>
</feature>
<feature type="binding site" evidence="1">
    <location>
        <begin position="299"/>
        <end position="303"/>
    </location>
    <ligand>
        <name>FMN</name>
        <dbReference type="ChEBI" id="CHEBI:58210"/>
    </ligand>
</feature>
<feature type="binding site" evidence="1">
    <location>
        <position position="325"/>
    </location>
    <ligand>
        <name>FMN</name>
        <dbReference type="ChEBI" id="CHEBI:58210"/>
    </ligand>
</feature>
<dbReference type="EC" id="4.2.3.5" evidence="1"/>
<dbReference type="EMBL" id="CP000776">
    <property type="protein sequence ID" value="ABS51781.1"/>
    <property type="molecule type" value="Genomic_DNA"/>
</dbReference>
<dbReference type="RefSeq" id="WP_011991574.1">
    <property type="nucleotide sequence ID" value="NC_009714.1"/>
</dbReference>
<dbReference type="SMR" id="A7HZN6"/>
<dbReference type="STRING" id="360107.CHAB381_0114"/>
<dbReference type="KEGG" id="cha:CHAB381_0114"/>
<dbReference type="eggNOG" id="COG0082">
    <property type="taxonomic scope" value="Bacteria"/>
</dbReference>
<dbReference type="HOGENOM" id="CLU_034547_0_2_7"/>
<dbReference type="OrthoDB" id="9771806at2"/>
<dbReference type="UniPathway" id="UPA00053">
    <property type="reaction ID" value="UER00090"/>
</dbReference>
<dbReference type="Proteomes" id="UP000002407">
    <property type="component" value="Chromosome"/>
</dbReference>
<dbReference type="GO" id="GO:0005829">
    <property type="term" value="C:cytosol"/>
    <property type="evidence" value="ECO:0007669"/>
    <property type="project" value="TreeGrafter"/>
</dbReference>
<dbReference type="GO" id="GO:0004107">
    <property type="term" value="F:chorismate synthase activity"/>
    <property type="evidence" value="ECO:0007669"/>
    <property type="project" value="UniProtKB-UniRule"/>
</dbReference>
<dbReference type="GO" id="GO:0010181">
    <property type="term" value="F:FMN binding"/>
    <property type="evidence" value="ECO:0007669"/>
    <property type="project" value="TreeGrafter"/>
</dbReference>
<dbReference type="GO" id="GO:0008652">
    <property type="term" value="P:amino acid biosynthetic process"/>
    <property type="evidence" value="ECO:0007669"/>
    <property type="project" value="UniProtKB-KW"/>
</dbReference>
<dbReference type="GO" id="GO:0009073">
    <property type="term" value="P:aromatic amino acid family biosynthetic process"/>
    <property type="evidence" value="ECO:0007669"/>
    <property type="project" value="UniProtKB-KW"/>
</dbReference>
<dbReference type="GO" id="GO:0009423">
    <property type="term" value="P:chorismate biosynthetic process"/>
    <property type="evidence" value="ECO:0007669"/>
    <property type="project" value="UniProtKB-UniRule"/>
</dbReference>
<dbReference type="CDD" id="cd07304">
    <property type="entry name" value="Chorismate_synthase"/>
    <property type="match status" value="1"/>
</dbReference>
<dbReference type="Gene3D" id="3.60.150.10">
    <property type="entry name" value="Chorismate synthase AroC"/>
    <property type="match status" value="1"/>
</dbReference>
<dbReference type="HAMAP" id="MF_00300">
    <property type="entry name" value="Chorismate_synth"/>
    <property type="match status" value="1"/>
</dbReference>
<dbReference type="InterPro" id="IPR000453">
    <property type="entry name" value="Chorismate_synth"/>
</dbReference>
<dbReference type="InterPro" id="IPR035904">
    <property type="entry name" value="Chorismate_synth_AroC_sf"/>
</dbReference>
<dbReference type="InterPro" id="IPR020541">
    <property type="entry name" value="Chorismate_synthase_CS"/>
</dbReference>
<dbReference type="NCBIfam" id="TIGR00033">
    <property type="entry name" value="aroC"/>
    <property type="match status" value="1"/>
</dbReference>
<dbReference type="NCBIfam" id="NF003793">
    <property type="entry name" value="PRK05382.1"/>
    <property type="match status" value="1"/>
</dbReference>
<dbReference type="PANTHER" id="PTHR21085">
    <property type="entry name" value="CHORISMATE SYNTHASE"/>
    <property type="match status" value="1"/>
</dbReference>
<dbReference type="PANTHER" id="PTHR21085:SF0">
    <property type="entry name" value="CHORISMATE SYNTHASE"/>
    <property type="match status" value="1"/>
</dbReference>
<dbReference type="Pfam" id="PF01264">
    <property type="entry name" value="Chorismate_synt"/>
    <property type="match status" value="1"/>
</dbReference>
<dbReference type="PIRSF" id="PIRSF001456">
    <property type="entry name" value="Chorismate_synth"/>
    <property type="match status" value="1"/>
</dbReference>
<dbReference type="SUPFAM" id="SSF103263">
    <property type="entry name" value="Chorismate synthase, AroC"/>
    <property type="match status" value="1"/>
</dbReference>
<dbReference type="PROSITE" id="PS00787">
    <property type="entry name" value="CHORISMATE_SYNTHASE_1"/>
    <property type="match status" value="1"/>
</dbReference>
<dbReference type="PROSITE" id="PS00788">
    <property type="entry name" value="CHORISMATE_SYNTHASE_2"/>
    <property type="match status" value="1"/>
</dbReference>
<sequence>MNTFGRKLRLTTFGESHGNAIGGVIDGFPSGVKIDEKFIQAELDKRKPGGKFATARKENDKVQIFSGIFEGVSIGTPIGFIIFNENQKSKDYENIKNLFRPGHADFGYFKKFVIRDYRGGGRSSARETAVRVAAGAFAQILLNEFDICVQSGIFSIGSINKGGEISNAKNLKMDFDYAQTSEIFSLFKEFENEMKNEILNAKNAHDSVGGNVVTRVKNVPAGLGEVLYDKIDAKIAYALMGINGVKAVEIGAGVKASEMIGSENNDEILPFGKFKTNHSGGILGGITNGDEIIVKSHFKPTPSIFLAQNTIDESGAVKTLSLKGRHDPCIAVRGSVVATAMMRLIVADMMLLNLGSTLTSLKKFYL</sequence>
<name>AROC_CAMHC</name>
<reference key="1">
    <citation type="submission" date="2007-07" db="EMBL/GenBank/DDBJ databases">
        <title>Complete genome sequence of Campylobacter hominis ATCC BAA-381, a commensal isolated from the human gastrointestinal tract.</title>
        <authorList>
            <person name="Fouts D.E."/>
            <person name="Mongodin E.F."/>
            <person name="Puiu D."/>
            <person name="Sebastian Y."/>
            <person name="Miller W.G."/>
            <person name="Mandrell R.E."/>
            <person name="Nelson K.E."/>
        </authorList>
    </citation>
    <scope>NUCLEOTIDE SEQUENCE [LARGE SCALE GENOMIC DNA]</scope>
    <source>
        <strain>ATCC BAA-381 / DSM 21671 / CCUG 45161 / LMG 19568 / NCTC 13146 / CH001A</strain>
    </source>
</reference>
<proteinExistence type="inferred from homology"/>